<dbReference type="EMBL" id="CP000607">
    <property type="protein sequence ID" value="ABP37770.1"/>
    <property type="molecule type" value="Genomic_DNA"/>
</dbReference>
<dbReference type="SMR" id="A4SH11"/>
<dbReference type="STRING" id="290318.Cvib_1762"/>
<dbReference type="KEGG" id="pvi:Cvib_1762"/>
<dbReference type="eggNOG" id="COG2001">
    <property type="taxonomic scope" value="Bacteria"/>
</dbReference>
<dbReference type="HOGENOM" id="CLU_107907_0_5_10"/>
<dbReference type="OrthoDB" id="9807753at2"/>
<dbReference type="GO" id="GO:0005737">
    <property type="term" value="C:cytoplasm"/>
    <property type="evidence" value="ECO:0007669"/>
    <property type="project" value="UniProtKB-UniRule"/>
</dbReference>
<dbReference type="GO" id="GO:0009295">
    <property type="term" value="C:nucleoid"/>
    <property type="evidence" value="ECO:0007669"/>
    <property type="project" value="UniProtKB-SubCell"/>
</dbReference>
<dbReference type="GO" id="GO:0003700">
    <property type="term" value="F:DNA-binding transcription factor activity"/>
    <property type="evidence" value="ECO:0007669"/>
    <property type="project" value="UniProtKB-UniRule"/>
</dbReference>
<dbReference type="GO" id="GO:0000976">
    <property type="term" value="F:transcription cis-regulatory region binding"/>
    <property type="evidence" value="ECO:0007669"/>
    <property type="project" value="TreeGrafter"/>
</dbReference>
<dbReference type="GO" id="GO:2000143">
    <property type="term" value="P:negative regulation of DNA-templated transcription initiation"/>
    <property type="evidence" value="ECO:0007669"/>
    <property type="project" value="TreeGrafter"/>
</dbReference>
<dbReference type="CDD" id="cd16321">
    <property type="entry name" value="MraZ_C"/>
    <property type="match status" value="1"/>
</dbReference>
<dbReference type="CDD" id="cd16320">
    <property type="entry name" value="MraZ_N"/>
    <property type="match status" value="1"/>
</dbReference>
<dbReference type="Gene3D" id="3.40.1550.20">
    <property type="entry name" value="Transcriptional regulator MraZ domain"/>
    <property type="match status" value="1"/>
</dbReference>
<dbReference type="HAMAP" id="MF_01008">
    <property type="entry name" value="MraZ"/>
    <property type="match status" value="1"/>
</dbReference>
<dbReference type="InterPro" id="IPR003444">
    <property type="entry name" value="MraZ"/>
</dbReference>
<dbReference type="InterPro" id="IPR035644">
    <property type="entry name" value="MraZ_C"/>
</dbReference>
<dbReference type="InterPro" id="IPR020603">
    <property type="entry name" value="MraZ_dom"/>
</dbReference>
<dbReference type="InterPro" id="IPR035642">
    <property type="entry name" value="MraZ_N"/>
</dbReference>
<dbReference type="InterPro" id="IPR038619">
    <property type="entry name" value="MraZ_sf"/>
</dbReference>
<dbReference type="InterPro" id="IPR007159">
    <property type="entry name" value="SpoVT-AbrB_dom"/>
</dbReference>
<dbReference type="InterPro" id="IPR037914">
    <property type="entry name" value="SpoVT-AbrB_sf"/>
</dbReference>
<dbReference type="NCBIfam" id="NF001476">
    <property type="entry name" value="PRK00326.2-2"/>
    <property type="match status" value="1"/>
</dbReference>
<dbReference type="PANTHER" id="PTHR34701">
    <property type="entry name" value="TRANSCRIPTIONAL REGULATOR MRAZ"/>
    <property type="match status" value="1"/>
</dbReference>
<dbReference type="PANTHER" id="PTHR34701:SF1">
    <property type="entry name" value="TRANSCRIPTIONAL REGULATOR MRAZ"/>
    <property type="match status" value="1"/>
</dbReference>
<dbReference type="Pfam" id="PF02381">
    <property type="entry name" value="MraZ"/>
    <property type="match status" value="2"/>
</dbReference>
<dbReference type="SUPFAM" id="SSF89447">
    <property type="entry name" value="AbrB/MazE/MraZ-like"/>
    <property type="match status" value="1"/>
</dbReference>
<dbReference type="PROSITE" id="PS51740">
    <property type="entry name" value="SPOVT_ABRB"/>
    <property type="match status" value="2"/>
</dbReference>
<feature type="chain" id="PRO_1000084012" description="Transcriptional regulator MraZ">
    <location>
        <begin position="1"/>
        <end position="156"/>
    </location>
</feature>
<feature type="domain" description="SpoVT-AbrB 1" evidence="2">
    <location>
        <begin position="7"/>
        <end position="64"/>
    </location>
</feature>
<feature type="domain" description="SpoVT-AbrB 2" evidence="2">
    <location>
        <begin position="93"/>
        <end position="136"/>
    </location>
</feature>
<accession>A4SH11</accession>
<reference key="1">
    <citation type="submission" date="2007-03" db="EMBL/GenBank/DDBJ databases">
        <title>Complete sequence of Prosthecochloris vibrioformis DSM 265.</title>
        <authorList>
            <consortium name="US DOE Joint Genome Institute"/>
            <person name="Copeland A."/>
            <person name="Lucas S."/>
            <person name="Lapidus A."/>
            <person name="Barry K."/>
            <person name="Detter J.C."/>
            <person name="Glavina del Rio T."/>
            <person name="Hammon N."/>
            <person name="Israni S."/>
            <person name="Pitluck S."/>
            <person name="Schmutz J."/>
            <person name="Larimer F."/>
            <person name="Land M."/>
            <person name="Hauser L."/>
            <person name="Mikhailova N."/>
            <person name="Li T."/>
            <person name="Overmann J."/>
            <person name="Schuster S.C."/>
            <person name="Bryant D.A."/>
            <person name="Richardson P."/>
        </authorList>
    </citation>
    <scope>NUCLEOTIDE SEQUENCE [LARGE SCALE GENOMIC DNA]</scope>
    <source>
        <strain>DSM 265 / 1930</strain>
    </source>
</reference>
<keyword id="KW-0963">Cytoplasm</keyword>
<keyword id="KW-0238">DNA-binding</keyword>
<keyword id="KW-0677">Repeat</keyword>
<keyword id="KW-0804">Transcription</keyword>
<keyword id="KW-0805">Transcription regulation</keyword>
<evidence type="ECO:0000255" key="1">
    <source>
        <dbReference type="HAMAP-Rule" id="MF_01008"/>
    </source>
</evidence>
<evidence type="ECO:0000255" key="2">
    <source>
        <dbReference type="PROSITE-ProRule" id="PRU01076"/>
    </source>
</evidence>
<protein>
    <recommendedName>
        <fullName>Transcriptional regulator MraZ</fullName>
    </recommendedName>
</protein>
<proteinExistence type="inferred from homology"/>
<sequence length="156" mass="17291">MAGFIGKERHSIDEKGRLMIPARFRRKFADAGSCDGGASEYGRFGALYVMKTSDGSLELYEPSVWEGMGKSISALSDFNPEERLLKTLMYECLEMVELDRQGRIPLSREFLEHAGISGEVVILGADTKMIVWEPARLRGVVDGSSGRFAALAGRYF</sequence>
<name>MRAZ_CHLPM</name>
<gene>
    <name evidence="1" type="primary">mraZ</name>
    <name type="ordered locus">Cvib_1762</name>
</gene>
<organism>
    <name type="scientific">Chlorobium phaeovibrioides (strain DSM 265 / 1930)</name>
    <name type="common">Prosthecochloris vibrioformis (strain DSM 265)</name>
    <dbReference type="NCBI Taxonomy" id="290318"/>
    <lineage>
        <taxon>Bacteria</taxon>
        <taxon>Pseudomonadati</taxon>
        <taxon>Chlorobiota</taxon>
        <taxon>Chlorobiia</taxon>
        <taxon>Chlorobiales</taxon>
        <taxon>Chlorobiaceae</taxon>
        <taxon>Chlorobium/Pelodictyon group</taxon>
        <taxon>Chlorobium</taxon>
    </lineage>
</organism>
<comment type="subunit">
    <text evidence="1">Forms oligomers.</text>
</comment>
<comment type="subcellular location">
    <subcellularLocation>
        <location evidence="1">Cytoplasm</location>
        <location evidence="1">Nucleoid</location>
    </subcellularLocation>
</comment>
<comment type="similarity">
    <text evidence="1">Belongs to the MraZ family.</text>
</comment>